<gene>
    <name type="primary">st7</name>
    <name type="ORF">zgc:136822</name>
</gene>
<dbReference type="EMBL" id="BC115280">
    <property type="protein sequence ID" value="AAI15281.1"/>
    <property type="molecule type" value="mRNA"/>
</dbReference>
<dbReference type="RefSeq" id="NP_001035426.1">
    <property type="nucleotide sequence ID" value="NM_001040336.1"/>
</dbReference>
<dbReference type="SMR" id="Q1RLU8"/>
<dbReference type="FunCoup" id="Q1RLU8">
    <property type="interactions" value="1387"/>
</dbReference>
<dbReference type="STRING" id="7955.ENSDARP00000143195"/>
<dbReference type="GeneID" id="678587"/>
<dbReference type="KEGG" id="dre:678587"/>
<dbReference type="AGR" id="ZFIN:ZDB-GENE-060421-2807"/>
<dbReference type="CTD" id="7982"/>
<dbReference type="ZFIN" id="ZDB-GENE-060421-2807">
    <property type="gene designation" value="st7"/>
</dbReference>
<dbReference type="InParanoid" id="Q1RLU8"/>
<dbReference type="OrthoDB" id="5914722at2759"/>
<dbReference type="PhylomeDB" id="Q1RLU8"/>
<dbReference type="PRO" id="PR:Q1RLU8"/>
<dbReference type="Proteomes" id="UP000000437">
    <property type="component" value="Chromosome 18"/>
</dbReference>
<dbReference type="GO" id="GO:0016020">
    <property type="term" value="C:membrane"/>
    <property type="evidence" value="ECO:0007669"/>
    <property type="project" value="UniProtKB-SubCell"/>
</dbReference>
<dbReference type="CDD" id="cd11557">
    <property type="entry name" value="ST7"/>
    <property type="match status" value="1"/>
</dbReference>
<dbReference type="InterPro" id="IPR007311">
    <property type="entry name" value="ST7"/>
</dbReference>
<dbReference type="PANTHER" id="PTHR12745">
    <property type="entry name" value="SUPPRESSION OF TUMORIGENICITY 7"/>
    <property type="match status" value="1"/>
</dbReference>
<dbReference type="PANTHER" id="PTHR12745:SF12">
    <property type="entry name" value="SUPPRESSOR OF TUMORIGENICITY 7 PROTEIN HOMOLOG"/>
    <property type="match status" value="1"/>
</dbReference>
<dbReference type="Pfam" id="PF04184">
    <property type="entry name" value="ST7"/>
    <property type="match status" value="1"/>
</dbReference>
<sequence>MFGTESSLSMFLNTLTPKFYVALTGTSSLISGLILIFEWWYFRKYGTSFIEQVSVSHLRPLLGGVDNSTASSSSSSSNGDADSSRQSVSECKVWRNPLNLFRGAEYNRYTWVTGREPLTYYDMNLSAQDHQTFFTCDSDHLRPADAIMQKAWRERNPQARITAAHEALDLEDCATAYILLAEEEATTIVEAEKLFKQALKVGETCYRRSQQLQHHGSQYEAQHRRDTNVLVYIKRRLAMCSRKLGRTREAVKMMRDLMKEFPLLSMFNIHENLLESLLELQNYADVQAVLAKYDDISLPKSATICYTAALLKARAVSDKFSPEAASRRGLSTAEMNAVEAIHRAVEFNPHVPKYLLEMKSLILPPEHILKRGDSEAIAYTFFHLQHWKRVEGALNLLHCTWEGTFRMIPYPLEKGHLFYPYPVCTETADRELLPTVFHEVSVYPKKELPFFILFTAGLCSFTAMLALLTHQFPELMGVFAKAFLSTLFAPLNFIMEKVESILPSSLWHQLTRI</sequence>
<accession>Q1RLU8</accession>
<feature type="chain" id="PRO_0000339220" description="Suppressor of tumorigenicity 7 protein homolog">
    <location>
        <begin position="1"/>
        <end position="513"/>
    </location>
</feature>
<feature type="transmembrane region" description="Helical" evidence="1">
    <location>
        <begin position="19"/>
        <end position="39"/>
    </location>
</feature>
<feature type="transmembrane region" description="Helical" evidence="1">
    <location>
        <begin position="448"/>
        <end position="468"/>
    </location>
</feature>
<feature type="transmembrane region" description="Helical" evidence="1">
    <location>
        <begin position="475"/>
        <end position="495"/>
    </location>
</feature>
<protein>
    <recommendedName>
        <fullName>Suppressor of tumorigenicity 7 protein homolog</fullName>
    </recommendedName>
</protein>
<comment type="subcellular location">
    <subcellularLocation>
        <location evidence="2">Membrane</location>
        <topology evidence="2">Multi-pass membrane protein</topology>
    </subcellularLocation>
</comment>
<comment type="similarity">
    <text evidence="2">Belongs to the ST7 family.</text>
</comment>
<name>ST7_DANRE</name>
<keyword id="KW-0472">Membrane</keyword>
<keyword id="KW-1185">Reference proteome</keyword>
<keyword id="KW-0812">Transmembrane</keyword>
<keyword id="KW-1133">Transmembrane helix</keyword>
<organism>
    <name type="scientific">Danio rerio</name>
    <name type="common">Zebrafish</name>
    <name type="synonym">Brachydanio rerio</name>
    <dbReference type="NCBI Taxonomy" id="7955"/>
    <lineage>
        <taxon>Eukaryota</taxon>
        <taxon>Metazoa</taxon>
        <taxon>Chordata</taxon>
        <taxon>Craniata</taxon>
        <taxon>Vertebrata</taxon>
        <taxon>Euteleostomi</taxon>
        <taxon>Actinopterygii</taxon>
        <taxon>Neopterygii</taxon>
        <taxon>Teleostei</taxon>
        <taxon>Ostariophysi</taxon>
        <taxon>Cypriniformes</taxon>
        <taxon>Danionidae</taxon>
        <taxon>Danioninae</taxon>
        <taxon>Danio</taxon>
    </lineage>
</organism>
<proteinExistence type="evidence at transcript level"/>
<reference key="1">
    <citation type="submission" date="2006-04" db="EMBL/GenBank/DDBJ databases">
        <authorList>
            <consortium name="NIH - Zebrafish Gene Collection (ZGC) project"/>
        </authorList>
    </citation>
    <scope>NUCLEOTIDE SEQUENCE [LARGE SCALE MRNA]</scope>
</reference>
<evidence type="ECO:0000255" key="1"/>
<evidence type="ECO:0000305" key="2"/>